<protein>
    <recommendedName>
        <fullName evidence="7">Non-ribosomal peptide synthetase CmlP</fullName>
        <ecNumber evidence="5">6.2.1.-</ecNumber>
    </recommendedName>
</protein>
<proteinExistence type="evidence at protein level"/>
<accession>F2RB81</accession>
<reference key="1">
    <citation type="journal article" date="2011" name="BMC Genomics">
        <title>Genome-wide analysis of the role of GlnR in Streptomyces venezuelae provides new insights into global nitrogen regulation in actinomycetes.</title>
        <authorList>
            <person name="Pullan S.T."/>
            <person name="Chandra G."/>
            <person name="Bibb M.J."/>
            <person name="Merrick M."/>
        </authorList>
    </citation>
    <scope>NUCLEOTIDE SEQUENCE [LARGE SCALE GENOMIC DNA]</scope>
    <source>
        <strain>ATCC 10712 / CBS 650.69 / DSM 40230 / JCM 4526 / NBRC 13096 / PD 04745</strain>
    </source>
</reference>
<reference key="2">
    <citation type="journal article" date="2001" name="Microbiology">
        <title>The gene cluster for chloramphenicol biosynthesis in Streptomyces venezuelae ISP5230 includes novel shikimate pathway homologues and a monomodular non-ribosomal peptide synthetase gene.</title>
        <authorList>
            <person name="He J."/>
            <person name="Magarvey N."/>
            <person name="Piraee M."/>
            <person name="Vining L.C."/>
        </authorList>
    </citation>
    <scope>FUNCTION</scope>
    <scope>PATHWAY</scope>
    <scope>DISRUPTION PHENOTYPE</scope>
    <source>
        <strain>ATCC 10712 / CBS 650.69 / DSM 40230 / JCM 4526 / NBRC 13096 / PD 04745</strain>
    </source>
</reference>
<reference key="3">
    <citation type="journal article" date="2007" name="Org. Biomol. Chem.">
        <title>Formation of an aminoacyl-S-enzyme intermediate is a key step in the biosynthesis of chloramphenicol.</title>
        <authorList>
            <person name="Pacholec M."/>
            <person name="Sello J.K."/>
            <person name="Walsh C.T."/>
            <person name="Thomas M.G."/>
        </authorList>
    </citation>
    <scope>FUNCTION</scope>
    <scope>CATALYTIC ACTIVITY</scope>
    <scope>BIOPHYSICOCHEMICAL PROPERTIES</scope>
    <scope>PATHWAY</scope>
    <scope>DOMAIN</scope>
</reference>
<comment type="function">
    <text evidence="4 5">Involved in chloramphenicol biosynthesis (PubMed:11577160). Activates 4-amino-L-phenylalanine by adenylation and loads it onto its peptidyl carrier domain, via a thioester linkage to the phosphopanthetheine moiety (PubMed:17520135). Can also adenylate tyrosine and phenylalanine at low rates, but not L-p-nitrophenylalanine or threo-phenylserine (PubMed:17520135).</text>
</comment>
<comment type="catalytic activity">
    <reaction evidence="5">
        <text>4-amino-L-phenylalanine + holo-[peptidyl-carrier protein] + ATP = 4-amino-L-phenylalanyl-[peptidyl-carrier protein] + AMP + diphosphate</text>
        <dbReference type="Rhea" id="RHEA:59436"/>
        <dbReference type="Rhea" id="RHEA-COMP:11480"/>
        <dbReference type="Rhea" id="RHEA-COMP:15237"/>
        <dbReference type="ChEBI" id="CHEBI:30616"/>
        <dbReference type="ChEBI" id="CHEBI:33019"/>
        <dbReference type="ChEBI" id="CHEBI:64479"/>
        <dbReference type="ChEBI" id="CHEBI:142855"/>
        <dbReference type="ChEBI" id="CHEBI:143072"/>
        <dbReference type="ChEBI" id="CHEBI:456215"/>
    </reaction>
    <physiologicalReaction direction="left-to-right" evidence="5">
        <dbReference type="Rhea" id="RHEA:59437"/>
    </physiologicalReaction>
</comment>
<comment type="cofactor">
    <cofactor evidence="1">
        <name>pantetheine 4'-phosphate</name>
        <dbReference type="ChEBI" id="CHEBI:47942"/>
    </cofactor>
    <text evidence="1">Binds 1 phosphopantetheine covalently.</text>
</comment>
<comment type="biophysicochemical properties">
    <kinetics>
        <KM evidence="5">0.9 mM for 4-amino-L-phenylalanine</KM>
        <KM evidence="5">4.1 mM for L-tyrosine</KM>
        <KM evidence="5">9.4 mM for L-phenylalanine</KM>
        <text evidence="5">kcat is 7.3 min(-1) for adenylation of 4-amino-L-phenylalanine. kcat is 1.97 min(-1) for adenylation of L-tyrosine. kcat is 0.90 min(-1) for adenylation of L-phenylalanine.</text>
    </kinetics>
</comment>
<comment type="pathway">
    <text evidence="4 5">Antibiotic biosynthesis.</text>
</comment>
<comment type="domain">
    <text evidence="8">Contains an N-terminal adenylation domain, an internal peptidyl carrier domain and a C-terminal domain that is homologous to nicotinamide-dependent dehydrogenases.</text>
</comment>
<comment type="disruption phenotype">
    <text evidence="4">Disruption mutant does not produce chloramphenicol. Mutant does not accumulate 4-amino-L-phenylalanine.</text>
</comment>
<comment type="similarity">
    <text evidence="7">Belongs to the ATP-dependent AMP-binding enzyme family.</text>
</comment>
<sequence>MVELPDLLTDLFRRHRGRTALRTAGRTWTYEELDRVTSALARRIDAECPAGRRVLVAGEHTAEAVVWALAAMRSHAVHTPMNPGLPADRFEEFARVADAALLVCFEREALVRGEKAGLRALYAGDVGWPTDPAPAPADGTADEPARSRVAYSIFTSGSTGDPKLVDVGHGGLLNLCRSLRRLLDITPDDQVLHFASLSFDASVSEILGTLYAGATLVVPVRDQASWLGSVSRHLAAHGCDLAMLSPSVYARLDEAARSRIRKVEFCGEALGEGEYDKAARYSRVFNAYGPTEATVCFSLAELTSYTPSIGTPVDGFRAYVRDPDSGDHATAGTGELVIVGDGVALGYAGGSPAENEVFGTVDGSPAYATGDVVSLSDDGELTYLGRIDEQIKRLGHRVNLAHVGSTLSRHLGREVALVRQDATILLVTAADGEATEESLMARIRDLVPVWEAPDRLVLVDALPLTSGGKVDRSALRELLASPAGAPHGGTDGEDAAELRRVLDVVTAVLGQEIGPETSIFDAGGSSLAMIQIQVKLSDAYGEEAVEAAFAAMDYDFAPAAFLRHLRGEAVAPAESAVDTLLRRVETERDALRAELPLLRRDTRHEPVPGAADGDREVLLTGASGFIGGHVLDRLLAAGRPVLVVSTGDPDGVLTGHATRFGRQAADYARVRAISYAELERWVDRRRGPVVDAVVHCGYQVNHLLPLDSHLSGSVRNTALVVRAAAALGARSFAFLSAASAGADFLPLSAATLTAVGDPYSRSKLISEEYVNTLAVLGCAVSHYRPGLVYGHRPEDRHHLKDDWFTALLETARRVGAMPRLSGHVPVCDVGTLADTLLGRPDANPGTADGASRTPDSRSAVVVHRTYALDELLRHTGLTEADVLAPAAWFERVRDGGEVPAPLLAAMQAALSGPGWPSAHREVDHDILGRLLGTPPDTPAGDRPERTGTTAEAQNGAAHAPTPR</sequence>
<feature type="chain" id="PRO_0000447247" description="Non-ribosomal peptide synthetase CmlP">
    <location>
        <begin position="1"/>
        <end position="963"/>
    </location>
</feature>
<feature type="domain" description="Carrier" evidence="2">
    <location>
        <begin position="492"/>
        <end position="568"/>
    </location>
</feature>
<feature type="region of interest" description="Disordered" evidence="3">
    <location>
        <begin position="928"/>
        <end position="963"/>
    </location>
</feature>
<feature type="modified residue" description="O-(pantetheine 4'-phosphoryl)serine" evidence="2">
    <location>
        <position position="526"/>
    </location>
</feature>
<organism>
    <name type="scientific">Streptomyces venezuelae (strain ATCC 10712 / CBS 650.69 / DSM 40230 / JCM 4526 / NBRC 13096 / PD 04745)</name>
    <dbReference type="NCBI Taxonomy" id="953739"/>
    <lineage>
        <taxon>Bacteria</taxon>
        <taxon>Bacillati</taxon>
        <taxon>Actinomycetota</taxon>
        <taxon>Actinomycetes</taxon>
        <taxon>Kitasatosporales</taxon>
        <taxon>Streptomycetaceae</taxon>
        <taxon>Streptomyces</taxon>
    </lineage>
</organism>
<gene>
    <name evidence="6" type="primary">cmlP</name>
    <name evidence="9" type="ordered locus">SVEN_0922</name>
</gene>
<dbReference type="EC" id="6.2.1.-" evidence="5"/>
<dbReference type="EMBL" id="FR845719">
    <property type="protein sequence ID" value="CCA54209.1"/>
    <property type="molecule type" value="Genomic_DNA"/>
</dbReference>
<dbReference type="SMR" id="F2RB81"/>
<dbReference type="STRING" id="953739.SVEN_0922"/>
<dbReference type="KEGG" id="sve:SVEN_0922"/>
<dbReference type="PATRIC" id="fig|953739.5.peg.2968"/>
<dbReference type="eggNOG" id="COG1020">
    <property type="taxonomic scope" value="Bacteria"/>
</dbReference>
<dbReference type="HOGENOM" id="CLU_000022_2_17_11"/>
<dbReference type="BioCyc" id="MetaCyc:MONOMER-20703"/>
<dbReference type="Proteomes" id="UP000006854">
    <property type="component" value="Chromosome"/>
</dbReference>
<dbReference type="GO" id="GO:0005829">
    <property type="term" value="C:cytosol"/>
    <property type="evidence" value="ECO:0007669"/>
    <property type="project" value="TreeGrafter"/>
</dbReference>
<dbReference type="GO" id="GO:0005524">
    <property type="term" value="F:ATP binding"/>
    <property type="evidence" value="ECO:0007669"/>
    <property type="project" value="UniProtKB-KW"/>
</dbReference>
<dbReference type="GO" id="GO:0016874">
    <property type="term" value="F:ligase activity"/>
    <property type="evidence" value="ECO:0007669"/>
    <property type="project" value="UniProtKB-KW"/>
</dbReference>
<dbReference type="GO" id="GO:0031177">
    <property type="term" value="F:phosphopantetheine binding"/>
    <property type="evidence" value="ECO:0007669"/>
    <property type="project" value="TreeGrafter"/>
</dbReference>
<dbReference type="GO" id="GO:0043041">
    <property type="term" value="P:amino acid activation for nonribosomal peptide biosynthetic process"/>
    <property type="evidence" value="ECO:0007669"/>
    <property type="project" value="TreeGrafter"/>
</dbReference>
<dbReference type="GO" id="GO:0017000">
    <property type="term" value="P:antibiotic biosynthetic process"/>
    <property type="evidence" value="ECO:0007669"/>
    <property type="project" value="UniProtKB-KW"/>
</dbReference>
<dbReference type="GO" id="GO:0044550">
    <property type="term" value="P:secondary metabolite biosynthetic process"/>
    <property type="evidence" value="ECO:0007669"/>
    <property type="project" value="TreeGrafter"/>
</dbReference>
<dbReference type="Gene3D" id="3.30.300.30">
    <property type="match status" value="1"/>
</dbReference>
<dbReference type="Gene3D" id="1.10.1200.10">
    <property type="entry name" value="ACP-like"/>
    <property type="match status" value="1"/>
</dbReference>
<dbReference type="Gene3D" id="3.40.50.12780">
    <property type="entry name" value="N-terminal domain of ligase-like"/>
    <property type="match status" value="1"/>
</dbReference>
<dbReference type="Gene3D" id="3.40.50.720">
    <property type="entry name" value="NAD(P)-binding Rossmann-like Domain"/>
    <property type="match status" value="1"/>
</dbReference>
<dbReference type="InterPro" id="IPR010071">
    <property type="entry name" value="AA_adenyl_dom"/>
</dbReference>
<dbReference type="InterPro" id="IPR036736">
    <property type="entry name" value="ACP-like_sf"/>
</dbReference>
<dbReference type="InterPro" id="IPR045851">
    <property type="entry name" value="AMP-bd_C_sf"/>
</dbReference>
<dbReference type="InterPro" id="IPR000873">
    <property type="entry name" value="AMP-dep_synth/lig_dom"/>
</dbReference>
<dbReference type="InterPro" id="IPR042099">
    <property type="entry name" value="ANL_N_sf"/>
</dbReference>
<dbReference type="InterPro" id="IPR001509">
    <property type="entry name" value="Epimerase_deHydtase"/>
</dbReference>
<dbReference type="InterPro" id="IPR036291">
    <property type="entry name" value="NAD(P)-bd_dom_sf"/>
</dbReference>
<dbReference type="InterPro" id="IPR009081">
    <property type="entry name" value="PP-bd_ACP"/>
</dbReference>
<dbReference type="NCBIfam" id="TIGR01733">
    <property type="entry name" value="AA-adenyl-dom"/>
    <property type="match status" value="1"/>
</dbReference>
<dbReference type="PANTHER" id="PTHR45527:SF1">
    <property type="entry name" value="FATTY ACID SYNTHASE"/>
    <property type="match status" value="1"/>
</dbReference>
<dbReference type="PANTHER" id="PTHR45527">
    <property type="entry name" value="NONRIBOSOMAL PEPTIDE SYNTHETASE"/>
    <property type="match status" value="1"/>
</dbReference>
<dbReference type="Pfam" id="PF00501">
    <property type="entry name" value="AMP-binding"/>
    <property type="match status" value="1"/>
</dbReference>
<dbReference type="Pfam" id="PF01370">
    <property type="entry name" value="Epimerase"/>
    <property type="match status" value="1"/>
</dbReference>
<dbReference type="Pfam" id="PF00550">
    <property type="entry name" value="PP-binding"/>
    <property type="match status" value="1"/>
</dbReference>
<dbReference type="SUPFAM" id="SSF56801">
    <property type="entry name" value="Acetyl-CoA synthetase-like"/>
    <property type="match status" value="1"/>
</dbReference>
<dbReference type="SUPFAM" id="SSF47336">
    <property type="entry name" value="ACP-like"/>
    <property type="match status" value="1"/>
</dbReference>
<dbReference type="SUPFAM" id="SSF51735">
    <property type="entry name" value="NAD(P)-binding Rossmann-fold domains"/>
    <property type="match status" value="1"/>
</dbReference>
<keyword id="KW-0045">Antibiotic biosynthesis</keyword>
<keyword id="KW-0067">ATP-binding</keyword>
<keyword id="KW-0436">Ligase</keyword>
<keyword id="KW-0547">Nucleotide-binding</keyword>
<keyword id="KW-0596">Phosphopantetheine</keyword>
<keyword id="KW-0597">Phosphoprotein</keyword>
<keyword id="KW-1185">Reference proteome</keyword>
<evidence type="ECO:0000250" key="1">
    <source>
        <dbReference type="UniProtKB" id="P0C061"/>
    </source>
</evidence>
<evidence type="ECO:0000255" key="2">
    <source>
        <dbReference type="PROSITE-ProRule" id="PRU00258"/>
    </source>
</evidence>
<evidence type="ECO:0000256" key="3">
    <source>
        <dbReference type="SAM" id="MobiDB-lite"/>
    </source>
</evidence>
<evidence type="ECO:0000269" key="4">
    <source>
    </source>
</evidence>
<evidence type="ECO:0000269" key="5">
    <source>
    </source>
</evidence>
<evidence type="ECO:0000303" key="6">
    <source>
    </source>
</evidence>
<evidence type="ECO:0000305" key="7"/>
<evidence type="ECO:0000305" key="8">
    <source>
    </source>
</evidence>
<evidence type="ECO:0000312" key="9">
    <source>
        <dbReference type="EMBL" id="CCA54209.1"/>
    </source>
</evidence>
<name>CMLP_STRVP</name>